<comment type="function">
    <text evidence="1">Specifically methylates the pseudouridine at position 1915 (m3Psi1915) in 23S rRNA.</text>
</comment>
<comment type="catalytic activity">
    <reaction evidence="1">
        <text>pseudouridine(1915) in 23S rRNA + S-adenosyl-L-methionine = N(3)-methylpseudouridine(1915) in 23S rRNA + S-adenosyl-L-homocysteine + H(+)</text>
        <dbReference type="Rhea" id="RHEA:42752"/>
        <dbReference type="Rhea" id="RHEA-COMP:10221"/>
        <dbReference type="Rhea" id="RHEA-COMP:10222"/>
        <dbReference type="ChEBI" id="CHEBI:15378"/>
        <dbReference type="ChEBI" id="CHEBI:57856"/>
        <dbReference type="ChEBI" id="CHEBI:59789"/>
        <dbReference type="ChEBI" id="CHEBI:65314"/>
        <dbReference type="ChEBI" id="CHEBI:74486"/>
        <dbReference type="EC" id="2.1.1.177"/>
    </reaction>
</comment>
<comment type="subcellular location">
    <subcellularLocation>
        <location evidence="1">Cytoplasm</location>
    </subcellularLocation>
</comment>
<comment type="similarity">
    <text evidence="1">Belongs to the RNA methyltransferase RlmH family.</text>
</comment>
<protein>
    <recommendedName>
        <fullName evidence="1">Putative ribosomal RNA large subunit methyltransferase H</fullName>
        <ecNumber evidence="1">2.1.1.177</ecNumber>
    </recommendedName>
    <alternativeName>
        <fullName evidence="1">23S rRNA (pseudouridine1915-N3)-methyltransferase</fullName>
    </alternativeName>
    <alternativeName>
        <fullName evidence="1">rRNA (pseudouridine-N3-)-methyltransferase RlmH</fullName>
    </alternativeName>
</protein>
<proteinExistence type="inferred from homology"/>
<gene>
    <name evidence="1" type="primary">rlmH</name>
    <name type="ordered locus">MmarC6_1622</name>
</gene>
<reference key="1">
    <citation type="submission" date="2007-10" db="EMBL/GenBank/DDBJ databases">
        <title>Complete sequence of Methanococcus maripaludis C6.</title>
        <authorList>
            <consortium name="US DOE Joint Genome Institute"/>
            <person name="Copeland A."/>
            <person name="Lucas S."/>
            <person name="Lapidus A."/>
            <person name="Barry K."/>
            <person name="Glavina del Rio T."/>
            <person name="Dalin E."/>
            <person name="Tice H."/>
            <person name="Pitluck S."/>
            <person name="Clum A."/>
            <person name="Schmutz J."/>
            <person name="Larimer F."/>
            <person name="Land M."/>
            <person name="Hauser L."/>
            <person name="Kyrpides N."/>
            <person name="Mikhailova N."/>
            <person name="Sieprawska-Lupa M."/>
            <person name="Whitman W.B."/>
            <person name="Richardson P."/>
        </authorList>
    </citation>
    <scope>NUCLEOTIDE SEQUENCE [LARGE SCALE GENOMIC DNA]</scope>
    <source>
        <strain>C6 / ATCC BAA-1332</strain>
    </source>
</reference>
<organism>
    <name type="scientific">Methanococcus maripaludis (strain C6 / ATCC BAA-1332)</name>
    <dbReference type="NCBI Taxonomy" id="444158"/>
    <lineage>
        <taxon>Archaea</taxon>
        <taxon>Methanobacteriati</taxon>
        <taxon>Methanobacteriota</taxon>
        <taxon>Methanomada group</taxon>
        <taxon>Methanococci</taxon>
        <taxon>Methanococcales</taxon>
        <taxon>Methanococcaceae</taxon>
        <taxon>Methanococcus</taxon>
    </lineage>
</organism>
<name>RLMH_METM6</name>
<feature type="chain" id="PRO_0000366683" description="Putative ribosomal RNA large subunit methyltransferase H">
    <location>
        <begin position="1"/>
        <end position="159"/>
    </location>
</feature>
<feature type="binding site" evidence="1">
    <location>
        <position position="76"/>
    </location>
    <ligand>
        <name>S-adenosyl-L-methionine</name>
        <dbReference type="ChEBI" id="CHEBI:59789"/>
    </ligand>
</feature>
<feature type="binding site" evidence="1">
    <location>
        <position position="108"/>
    </location>
    <ligand>
        <name>S-adenosyl-L-methionine</name>
        <dbReference type="ChEBI" id="CHEBI:59789"/>
    </ligand>
</feature>
<feature type="binding site" evidence="1">
    <location>
        <begin position="127"/>
        <end position="132"/>
    </location>
    <ligand>
        <name>S-adenosyl-L-methionine</name>
        <dbReference type="ChEBI" id="CHEBI:59789"/>
    </ligand>
</feature>
<keyword id="KW-0963">Cytoplasm</keyword>
<keyword id="KW-0489">Methyltransferase</keyword>
<keyword id="KW-0698">rRNA processing</keyword>
<keyword id="KW-0949">S-adenosyl-L-methionine</keyword>
<keyword id="KW-0808">Transferase</keyword>
<sequence>MNITIISVGKIKEKYLSGAIIEYSKRISRYSKLDIIEVADEKTPENPSDVEKSKLLEKEAERILKYLKKDSFVITLEILGKELTSESLAKKINDLSISGKSDITFIIGGSLGLSRNISEISDFKLSFSKMTFPHQLMRVILLEQIYRSFRIINGEPYHK</sequence>
<dbReference type="EC" id="2.1.1.177" evidence="1"/>
<dbReference type="EMBL" id="CP000867">
    <property type="protein sequence ID" value="ABX02434.1"/>
    <property type="molecule type" value="Genomic_DNA"/>
</dbReference>
<dbReference type="SMR" id="A9AAR1"/>
<dbReference type="STRING" id="444158.MmarC6_1622"/>
<dbReference type="KEGG" id="mmx:MmarC6_1622"/>
<dbReference type="eggNOG" id="arCOG05111">
    <property type="taxonomic scope" value="Archaea"/>
</dbReference>
<dbReference type="HOGENOM" id="CLU_100552_0_0_2"/>
<dbReference type="OrthoDB" id="111266at2157"/>
<dbReference type="PhylomeDB" id="A9AAR1"/>
<dbReference type="GO" id="GO:0005737">
    <property type="term" value="C:cytoplasm"/>
    <property type="evidence" value="ECO:0007669"/>
    <property type="project" value="UniProtKB-SubCell"/>
</dbReference>
<dbReference type="GO" id="GO:0070038">
    <property type="term" value="F:rRNA (pseudouridine-N3-)-methyltransferase activity"/>
    <property type="evidence" value="ECO:0007669"/>
    <property type="project" value="UniProtKB-UniRule"/>
</dbReference>
<dbReference type="CDD" id="cd18081">
    <property type="entry name" value="RlmH-like"/>
    <property type="match status" value="1"/>
</dbReference>
<dbReference type="Gene3D" id="3.40.1280.10">
    <property type="match status" value="1"/>
</dbReference>
<dbReference type="HAMAP" id="MF_00658">
    <property type="entry name" value="23SrRNA_methyltr_H"/>
    <property type="match status" value="1"/>
</dbReference>
<dbReference type="InterPro" id="IPR029028">
    <property type="entry name" value="Alpha/beta_knot_MTases"/>
</dbReference>
<dbReference type="InterPro" id="IPR003742">
    <property type="entry name" value="RlmH-like"/>
</dbReference>
<dbReference type="InterPro" id="IPR029026">
    <property type="entry name" value="tRNA_m1G_MTases_N"/>
</dbReference>
<dbReference type="NCBIfam" id="NF000985">
    <property type="entry name" value="PRK00103.1-3"/>
    <property type="match status" value="1"/>
</dbReference>
<dbReference type="NCBIfam" id="TIGR00246">
    <property type="entry name" value="tRNA_RlmH_YbeA"/>
    <property type="match status" value="1"/>
</dbReference>
<dbReference type="PANTHER" id="PTHR33603">
    <property type="entry name" value="METHYLTRANSFERASE"/>
    <property type="match status" value="1"/>
</dbReference>
<dbReference type="PANTHER" id="PTHR33603:SF1">
    <property type="entry name" value="RIBOSOMAL RNA LARGE SUBUNIT METHYLTRANSFERASE H"/>
    <property type="match status" value="1"/>
</dbReference>
<dbReference type="Pfam" id="PF02590">
    <property type="entry name" value="SPOUT_MTase"/>
    <property type="match status" value="1"/>
</dbReference>
<dbReference type="PIRSF" id="PIRSF004505">
    <property type="entry name" value="MT_bac"/>
    <property type="match status" value="1"/>
</dbReference>
<dbReference type="SUPFAM" id="SSF75217">
    <property type="entry name" value="alpha/beta knot"/>
    <property type="match status" value="1"/>
</dbReference>
<evidence type="ECO:0000255" key="1">
    <source>
        <dbReference type="HAMAP-Rule" id="MF_00658"/>
    </source>
</evidence>
<accession>A9AAR1</accession>